<name>RS19_SACD2</name>
<evidence type="ECO:0000255" key="1">
    <source>
        <dbReference type="HAMAP-Rule" id="MF_00531"/>
    </source>
</evidence>
<evidence type="ECO:0000305" key="2"/>
<gene>
    <name evidence="1" type="primary">rpsS</name>
    <name type="ordered locus">Sde_0964</name>
</gene>
<keyword id="KW-1185">Reference proteome</keyword>
<keyword id="KW-0687">Ribonucleoprotein</keyword>
<keyword id="KW-0689">Ribosomal protein</keyword>
<keyword id="KW-0694">RNA-binding</keyword>
<keyword id="KW-0699">rRNA-binding</keyword>
<feature type="chain" id="PRO_0000265423" description="Small ribosomal subunit protein uS19">
    <location>
        <begin position="1"/>
        <end position="91"/>
    </location>
</feature>
<proteinExistence type="inferred from homology"/>
<organism>
    <name type="scientific">Saccharophagus degradans (strain 2-40 / ATCC 43961 / DSM 17024)</name>
    <dbReference type="NCBI Taxonomy" id="203122"/>
    <lineage>
        <taxon>Bacteria</taxon>
        <taxon>Pseudomonadati</taxon>
        <taxon>Pseudomonadota</taxon>
        <taxon>Gammaproteobacteria</taxon>
        <taxon>Cellvibrionales</taxon>
        <taxon>Cellvibrionaceae</taxon>
        <taxon>Saccharophagus</taxon>
    </lineage>
</organism>
<dbReference type="EMBL" id="CP000282">
    <property type="protein sequence ID" value="ABD80226.1"/>
    <property type="molecule type" value="Genomic_DNA"/>
</dbReference>
<dbReference type="RefSeq" id="WP_011467446.1">
    <property type="nucleotide sequence ID" value="NC_007912.1"/>
</dbReference>
<dbReference type="SMR" id="Q21M53"/>
<dbReference type="STRING" id="203122.Sde_0964"/>
<dbReference type="GeneID" id="98612649"/>
<dbReference type="KEGG" id="sde:Sde_0964"/>
<dbReference type="eggNOG" id="COG0185">
    <property type="taxonomic scope" value="Bacteria"/>
</dbReference>
<dbReference type="HOGENOM" id="CLU_144911_0_1_6"/>
<dbReference type="OrthoDB" id="9797833at2"/>
<dbReference type="Proteomes" id="UP000001947">
    <property type="component" value="Chromosome"/>
</dbReference>
<dbReference type="GO" id="GO:0005737">
    <property type="term" value="C:cytoplasm"/>
    <property type="evidence" value="ECO:0007669"/>
    <property type="project" value="UniProtKB-ARBA"/>
</dbReference>
<dbReference type="GO" id="GO:0015935">
    <property type="term" value="C:small ribosomal subunit"/>
    <property type="evidence" value="ECO:0007669"/>
    <property type="project" value="InterPro"/>
</dbReference>
<dbReference type="GO" id="GO:0019843">
    <property type="term" value="F:rRNA binding"/>
    <property type="evidence" value="ECO:0007669"/>
    <property type="project" value="UniProtKB-UniRule"/>
</dbReference>
<dbReference type="GO" id="GO:0003735">
    <property type="term" value="F:structural constituent of ribosome"/>
    <property type="evidence" value="ECO:0007669"/>
    <property type="project" value="InterPro"/>
</dbReference>
<dbReference type="GO" id="GO:0000028">
    <property type="term" value="P:ribosomal small subunit assembly"/>
    <property type="evidence" value="ECO:0007669"/>
    <property type="project" value="TreeGrafter"/>
</dbReference>
<dbReference type="GO" id="GO:0006412">
    <property type="term" value="P:translation"/>
    <property type="evidence" value="ECO:0007669"/>
    <property type="project" value="UniProtKB-UniRule"/>
</dbReference>
<dbReference type="FunFam" id="3.30.860.10:FF:000001">
    <property type="entry name" value="30S ribosomal protein S19"/>
    <property type="match status" value="1"/>
</dbReference>
<dbReference type="Gene3D" id="3.30.860.10">
    <property type="entry name" value="30s Ribosomal Protein S19, Chain A"/>
    <property type="match status" value="1"/>
</dbReference>
<dbReference type="HAMAP" id="MF_00531">
    <property type="entry name" value="Ribosomal_uS19"/>
    <property type="match status" value="1"/>
</dbReference>
<dbReference type="InterPro" id="IPR002222">
    <property type="entry name" value="Ribosomal_uS19"/>
</dbReference>
<dbReference type="InterPro" id="IPR005732">
    <property type="entry name" value="Ribosomal_uS19_bac-type"/>
</dbReference>
<dbReference type="InterPro" id="IPR020934">
    <property type="entry name" value="Ribosomal_uS19_CS"/>
</dbReference>
<dbReference type="InterPro" id="IPR023575">
    <property type="entry name" value="Ribosomal_uS19_SF"/>
</dbReference>
<dbReference type="NCBIfam" id="TIGR01050">
    <property type="entry name" value="rpsS_bact"/>
    <property type="match status" value="1"/>
</dbReference>
<dbReference type="PANTHER" id="PTHR11880">
    <property type="entry name" value="RIBOSOMAL PROTEIN S19P FAMILY MEMBER"/>
    <property type="match status" value="1"/>
</dbReference>
<dbReference type="PANTHER" id="PTHR11880:SF8">
    <property type="entry name" value="SMALL RIBOSOMAL SUBUNIT PROTEIN US19M"/>
    <property type="match status" value="1"/>
</dbReference>
<dbReference type="Pfam" id="PF00203">
    <property type="entry name" value="Ribosomal_S19"/>
    <property type="match status" value="1"/>
</dbReference>
<dbReference type="PIRSF" id="PIRSF002144">
    <property type="entry name" value="Ribosomal_S19"/>
    <property type="match status" value="1"/>
</dbReference>
<dbReference type="PRINTS" id="PR00975">
    <property type="entry name" value="RIBOSOMALS19"/>
</dbReference>
<dbReference type="SUPFAM" id="SSF54570">
    <property type="entry name" value="Ribosomal protein S19"/>
    <property type="match status" value="1"/>
</dbReference>
<dbReference type="PROSITE" id="PS00323">
    <property type="entry name" value="RIBOSOMAL_S19"/>
    <property type="match status" value="1"/>
</dbReference>
<reference key="1">
    <citation type="journal article" date="2008" name="PLoS Genet.">
        <title>Complete genome sequence of the complex carbohydrate-degrading marine bacterium, Saccharophagus degradans strain 2-40 T.</title>
        <authorList>
            <person name="Weiner R.M."/>
            <person name="Taylor L.E. II"/>
            <person name="Henrissat B."/>
            <person name="Hauser L."/>
            <person name="Land M."/>
            <person name="Coutinho P.M."/>
            <person name="Rancurel C."/>
            <person name="Saunders E.H."/>
            <person name="Longmire A.G."/>
            <person name="Zhang H."/>
            <person name="Bayer E.A."/>
            <person name="Gilbert H.J."/>
            <person name="Larimer F."/>
            <person name="Zhulin I.B."/>
            <person name="Ekborg N.A."/>
            <person name="Lamed R."/>
            <person name="Richardson P.M."/>
            <person name="Borovok I."/>
            <person name="Hutcheson S."/>
        </authorList>
    </citation>
    <scope>NUCLEOTIDE SEQUENCE [LARGE SCALE GENOMIC DNA]</scope>
    <source>
        <strain>2-40 / ATCC 43961 / DSM 17024</strain>
    </source>
</reference>
<sequence length="91" mass="10371">MPRSLKKGPFIDHHLLSKVEAAAEKNDRRPIKTWSRRSMILPNMVGLTLAVHNGRQHVPVLVNEEMVGHKLGEFAVTRLYRGHVADKKAKR</sequence>
<comment type="function">
    <text evidence="1">Protein S19 forms a complex with S13 that binds strongly to the 16S ribosomal RNA.</text>
</comment>
<comment type="similarity">
    <text evidence="1">Belongs to the universal ribosomal protein uS19 family.</text>
</comment>
<accession>Q21M53</accession>
<protein>
    <recommendedName>
        <fullName evidence="1">Small ribosomal subunit protein uS19</fullName>
    </recommendedName>
    <alternativeName>
        <fullName evidence="2">30S ribosomal protein S19</fullName>
    </alternativeName>
</protein>